<proteinExistence type="evidence at protein level"/>
<protein>
    <recommendedName>
        <fullName evidence="1">Arfaptin-2</fullName>
    </recommendedName>
    <alternativeName>
        <fullName evidence="1">ADP-ribosylation factor-interacting protein 2</fullName>
    </alternativeName>
</protein>
<name>ARFP2_MOUSE</name>
<keyword id="KW-0072">Autophagy</keyword>
<keyword id="KW-0333">Golgi apparatus</keyword>
<keyword id="KW-0472">Membrane</keyword>
<keyword id="KW-0597">Phosphoprotein</keyword>
<keyword id="KW-1185">Reference proteome</keyword>
<reference key="1">
    <citation type="journal article" date="2005" name="Science">
        <title>The transcriptional landscape of the mammalian genome.</title>
        <authorList>
            <person name="Carninci P."/>
            <person name="Kasukawa T."/>
            <person name="Katayama S."/>
            <person name="Gough J."/>
            <person name="Frith M.C."/>
            <person name="Maeda N."/>
            <person name="Oyama R."/>
            <person name="Ravasi T."/>
            <person name="Lenhard B."/>
            <person name="Wells C."/>
            <person name="Kodzius R."/>
            <person name="Shimokawa K."/>
            <person name="Bajic V.B."/>
            <person name="Brenner S.E."/>
            <person name="Batalov S."/>
            <person name="Forrest A.R."/>
            <person name="Zavolan M."/>
            <person name="Davis M.J."/>
            <person name="Wilming L.G."/>
            <person name="Aidinis V."/>
            <person name="Allen J.E."/>
            <person name="Ambesi-Impiombato A."/>
            <person name="Apweiler R."/>
            <person name="Aturaliya R.N."/>
            <person name="Bailey T.L."/>
            <person name="Bansal M."/>
            <person name="Baxter L."/>
            <person name="Beisel K.W."/>
            <person name="Bersano T."/>
            <person name="Bono H."/>
            <person name="Chalk A.M."/>
            <person name="Chiu K.P."/>
            <person name="Choudhary V."/>
            <person name="Christoffels A."/>
            <person name="Clutterbuck D.R."/>
            <person name="Crowe M.L."/>
            <person name="Dalla E."/>
            <person name="Dalrymple B.P."/>
            <person name="de Bono B."/>
            <person name="Della Gatta G."/>
            <person name="di Bernardo D."/>
            <person name="Down T."/>
            <person name="Engstrom P."/>
            <person name="Fagiolini M."/>
            <person name="Faulkner G."/>
            <person name="Fletcher C.F."/>
            <person name="Fukushima T."/>
            <person name="Furuno M."/>
            <person name="Futaki S."/>
            <person name="Gariboldi M."/>
            <person name="Georgii-Hemming P."/>
            <person name="Gingeras T.R."/>
            <person name="Gojobori T."/>
            <person name="Green R.E."/>
            <person name="Gustincich S."/>
            <person name="Harbers M."/>
            <person name="Hayashi Y."/>
            <person name="Hensch T.K."/>
            <person name="Hirokawa N."/>
            <person name="Hill D."/>
            <person name="Huminiecki L."/>
            <person name="Iacono M."/>
            <person name="Ikeo K."/>
            <person name="Iwama A."/>
            <person name="Ishikawa T."/>
            <person name="Jakt M."/>
            <person name="Kanapin A."/>
            <person name="Katoh M."/>
            <person name="Kawasawa Y."/>
            <person name="Kelso J."/>
            <person name="Kitamura H."/>
            <person name="Kitano H."/>
            <person name="Kollias G."/>
            <person name="Krishnan S.P."/>
            <person name="Kruger A."/>
            <person name="Kummerfeld S.K."/>
            <person name="Kurochkin I.V."/>
            <person name="Lareau L.F."/>
            <person name="Lazarevic D."/>
            <person name="Lipovich L."/>
            <person name="Liu J."/>
            <person name="Liuni S."/>
            <person name="McWilliam S."/>
            <person name="Madan Babu M."/>
            <person name="Madera M."/>
            <person name="Marchionni L."/>
            <person name="Matsuda H."/>
            <person name="Matsuzawa S."/>
            <person name="Miki H."/>
            <person name="Mignone F."/>
            <person name="Miyake S."/>
            <person name="Morris K."/>
            <person name="Mottagui-Tabar S."/>
            <person name="Mulder N."/>
            <person name="Nakano N."/>
            <person name="Nakauchi H."/>
            <person name="Ng P."/>
            <person name="Nilsson R."/>
            <person name="Nishiguchi S."/>
            <person name="Nishikawa S."/>
            <person name="Nori F."/>
            <person name="Ohara O."/>
            <person name="Okazaki Y."/>
            <person name="Orlando V."/>
            <person name="Pang K.C."/>
            <person name="Pavan W.J."/>
            <person name="Pavesi G."/>
            <person name="Pesole G."/>
            <person name="Petrovsky N."/>
            <person name="Piazza S."/>
            <person name="Reed J."/>
            <person name="Reid J.F."/>
            <person name="Ring B.Z."/>
            <person name="Ringwald M."/>
            <person name="Rost B."/>
            <person name="Ruan Y."/>
            <person name="Salzberg S.L."/>
            <person name="Sandelin A."/>
            <person name="Schneider C."/>
            <person name="Schoenbach C."/>
            <person name="Sekiguchi K."/>
            <person name="Semple C.A."/>
            <person name="Seno S."/>
            <person name="Sessa L."/>
            <person name="Sheng Y."/>
            <person name="Shibata Y."/>
            <person name="Shimada H."/>
            <person name="Shimada K."/>
            <person name="Silva D."/>
            <person name="Sinclair B."/>
            <person name="Sperling S."/>
            <person name="Stupka E."/>
            <person name="Sugiura K."/>
            <person name="Sultana R."/>
            <person name="Takenaka Y."/>
            <person name="Taki K."/>
            <person name="Tammoja K."/>
            <person name="Tan S.L."/>
            <person name="Tang S."/>
            <person name="Taylor M.S."/>
            <person name="Tegner J."/>
            <person name="Teichmann S.A."/>
            <person name="Ueda H.R."/>
            <person name="van Nimwegen E."/>
            <person name="Verardo R."/>
            <person name="Wei C.L."/>
            <person name="Yagi K."/>
            <person name="Yamanishi H."/>
            <person name="Zabarovsky E."/>
            <person name="Zhu S."/>
            <person name="Zimmer A."/>
            <person name="Hide W."/>
            <person name="Bult C."/>
            <person name="Grimmond S.M."/>
            <person name="Teasdale R.D."/>
            <person name="Liu E.T."/>
            <person name="Brusic V."/>
            <person name="Quackenbush J."/>
            <person name="Wahlestedt C."/>
            <person name="Mattick J.S."/>
            <person name="Hume D.A."/>
            <person name="Kai C."/>
            <person name="Sasaki D."/>
            <person name="Tomaru Y."/>
            <person name="Fukuda S."/>
            <person name="Kanamori-Katayama M."/>
            <person name="Suzuki M."/>
            <person name="Aoki J."/>
            <person name="Arakawa T."/>
            <person name="Iida J."/>
            <person name="Imamura K."/>
            <person name="Itoh M."/>
            <person name="Kato T."/>
            <person name="Kawaji H."/>
            <person name="Kawagashira N."/>
            <person name="Kawashima T."/>
            <person name="Kojima M."/>
            <person name="Kondo S."/>
            <person name="Konno H."/>
            <person name="Nakano K."/>
            <person name="Ninomiya N."/>
            <person name="Nishio T."/>
            <person name="Okada M."/>
            <person name="Plessy C."/>
            <person name="Shibata K."/>
            <person name="Shiraki T."/>
            <person name="Suzuki S."/>
            <person name="Tagami M."/>
            <person name="Waki K."/>
            <person name="Watahiki A."/>
            <person name="Okamura-Oho Y."/>
            <person name="Suzuki H."/>
            <person name="Kawai J."/>
            <person name="Hayashizaki Y."/>
        </authorList>
    </citation>
    <scope>NUCLEOTIDE SEQUENCE [LARGE SCALE MRNA]</scope>
    <source>
        <strain>C57BL/6J</strain>
        <strain>NOD</strain>
        <tissue>Tongue</tissue>
    </source>
</reference>
<reference key="2">
    <citation type="journal article" date="2004" name="Genome Res.">
        <title>The status, quality, and expansion of the NIH full-length cDNA project: the Mammalian Gene Collection (MGC).</title>
        <authorList>
            <consortium name="The MGC Project Team"/>
        </authorList>
    </citation>
    <scope>NUCLEOTIDE SEQUENCE [LARGE SCALE MRNA]</scope>
    <source>
        <strain>FVB/N</strain>
        <tissue>Mammary tumor</tissue>
    </source>
</reference>
<reference key="3">
    <citation type="journal article" date="2010" name="Cell">
        <title>A tissue-specific atlas of mouse protein phosphorylation and expression.</title>
        <authorList>
            <person name="Huttlin E.L."/>
            <person name="Jedrychowski M.P."/>
            <person name="Elias J.E."/>
            <person name="Goswami T."/>
            <person name="Rad R."/>
            <person name="Beausoleil S.A."/>
            <person name="Villen J."/>
            <person name="Haas W."/>
            <person name="Sowa M.E."/>
            <person name="Gygi S.P."/>
        </authorList>
    </citation>
    <scope>IDENTIFICATION BY MASS SPECTROMETRY [LARGE SCALE ANALYSIS]</scope>
    <source>
        <tissue>Brain</tissue>
        <tissue>Kidney</tissue>
        <tissue>Lung</tissue>
        <tissue>Pancreas</tissue>
        <tissue>Spleen</tissue>
        <tissue>Testis</tissue>
    </source>
</reference>
<organism>
    <name type="scientific">Mus musculus</name>
    <name type="common">Mouse</name>
    <dbReference type="NCBI Taxonomy" id="10090"/>
    <lineage>
        <taxon>Eukaryota</taxon>
        <taxon>Metazoa</taxon>
        <taxon>Chordata</taxon>
        <taxon>Craniata</taxon>
        <taxon>Vertebrata</taxon>
        <taxon>Euteleostomi</taxon>
        <taxon>Mammalia</taxon>
        <taxon>Eutheria</taxon>
        <taxon>Euarchontoglires</taxon>
        <taxon>Glires</taxon>
        <taxon>Rodentia</taxon>
        <taxon>Myomorpha</taxon>
        <taxon>Muroidea</taxon>
        <taxon>Muridae</taxon>
        <taxon>Murinae</taxon>
        <taxon>Mus</taxon>
        <taxon>Mus</taxon>
    </lineage>
</organism>
<feature type="chain" id="PRO_0000064668" description="Arfaptin-2">
    <location>
        <begin position="1"/>
        <end position="341"/>
    </location>
</feature>
<feature type="domain" description="AH" evidence="2">
    <location>
        <begin position="121"/>
        <end position="321"/>
    </location>
</feature>
<feature type="region of interest" description="Disordered" evidence="3">
    <location>
        <begin position="46"/>
        <end position="84"/>
    </location>
</feature>
<feature type="compositionally biased region" description="Low complexity" evidence="3">
    <location>
        <begin position="65"/>
        <end position="81"/>
    </location>
</feature>
<feature type="modified residue" description="Phosphoserine" evidence="1">
    <location>
        <position position="72"/>
    </location>
</feature>
<feature type="sequence conflict" description="In Ref. 2; AAH34520." evidence="4" ref="2">
    <original>T</original>
    <variation>K</variation>
    <location>
        <position position="107"/>
    </location>
</feature>
<sequence length="341" mass="37773">MTDGILGKAATMEIPIHGNGEAGQLPEDDGLEQDLQQVMVSGPNLNETSIVSGGYGGSGDGLIPTGSGRHPSHSTSPSGPGDEVARGIAGEKFDIVKKWGINTYKCTKQLLSERFGRGSRTVDLELELQIELLRETKRKYESVLQLGRALTAHLYSLLQTQHALGDAFADLSQKSPELQEEFGYNAETQKLLCKNGETLLGAVNFFVSSINTLVTKTMEDTLMTVKQYEAARLEYDAYRTDLEELSLGPRDAGTRGRLESAQATFQTHRDKYEKLRGDVAIKLKFLEENKIKVMHKQLLLFHNAVSAYFAGNQKQLEQTLQQFNIKLRPPGAEKPSWLEEQ</sequence>
<dbReference type="EMBL" id="AK009100">
    <property type="protein sequence ID" value="BAB26070.1"/>
    <property type="molecule type" value="mRNA"/>
</dbReference>
<dbReference type="EMBL" id="AK154772">
    <property type="protein sequence ID" value="BAE32820.1"/>
    <property type="molecule type" value="mRNA"/>
</dbReference>
<dbReference type="EMBL" id="BC013794">
    <property type="protein sequence ID" value="AAH13794.1"/>
    <property type="molecule type" value="mRNA"/>
</dbReference>
<dbReference type="EMBL" id="BC022942">
    <property type="protein sequence ID" value="AAH22942.1"/>
    <property type="molecule type" value="mRNA"/>
</dbReference>
<dbReference type="EMBL" id="BC034520">
    <property type="protein sequence ID" value="AAH34520.1"/>
    <property type="molecule type" value="mRNA"/>
</dbReference>
<dbReference type="CCDS" id="CCDS21656.1"/>
<dbReference type="RefSeq" id="NP_084078.3">
    <property type="nucleotide sequence ID" value="NM_029802.4"/>
</dbReference>
<dbReference type="SMR" id="Q8K221"/>
<dbReference type="BioGRID" id="218408">
    <property type="interactions" value="10"/>
</dbReference>
<dbReference type="FunCoup" id="Q8K221">
    <property type="interactions" value="1566"/>
</dbReference>
<dbReference type="IntAct" id="Q8K221">
    <property type="interactions" value="1"/>
</dbReference>
<dbReference type="STRING" id="10090.ENSMUSP00000120387"/>
<dbReference type="iPTMnet" id="Q8K221"/>
<dbReference type="PhosphoSitePlus" id="Q8K221"/>
<dbReference type="PaxDb" id="10090-ENSMUSP00000120387"/>
<dbReference type="PeptideAtlas" id="Q8K221"/>
<dbReference type="ProteomicsDB" id="296341"/>
<dbReference type="Pumba" id="Q8K221"/>
<dbReference type="Antibodypedia" id="23860">
    <property type="antibodies" value="234 antibodies from 28 providers"/>
</dbReference>
<dbReference type="DNASU" id="76932"/>
<dbReference type="Ensembl" id="ENSMUST00000084782.10">
    <property type="protein sequence ID" value="ENSMUSP00000081840.3"/>
    <property type="gene ID" value="ENSMUSG00000030881.16"/>
</dbReference>
<dbReference type="Ensembl" id="ENSMUST00000131446.8">
    <property type="protein sequence ID" value="ENSMUSP00000120387.2"/>
    <property type="gene ID" value="ENSMUSG00000030881.16"/>
</dbReference>
<dbReference type="GeneID" id="76932"/>
<dbReference type="KEGG" id="mmu:76932"/>
<dbReference type="UCSC" id="uc009iyr.2">
    <property type="organism name" value="mouse"/>
</dbReference>
<dbReference type="AGR" id="MGI:1924182"/>
<dbReference type="CTD" id="23647"/>
<dbReference type="MGI" id="MGI:1924182">
    <property type="gene designation" value="Arfip2"/>
</dbReference>
<dbReference type="VEuPathDB" id="HostDB:ENSMUSG00000030881"/>
<dbReference type="eggNOG" id="KOG3876">
    <property type="taxonomic scope" value="Eukaryota"/>
</dbReference>
<dbReference type="GeneTree" id="ENSGT00950000183040"/>
<dbReference type="HOGENOM" id="CLU_047975_2_0_1"/>
<dbReference type="InParanoid" id="Q8K221"/>
<dbReference type="OMA" id="GRENYLA"/>
<dbReference type="OrthoDB" id="9994780at2759"/>
<dbReference type="PhylomeDB" id="Q8K221"/>
<dbReference type="TreeFam" id="TF314945"/>
<dbReference type="Reactome" id="R-MMU-6811440">
    <property type="pathway name" value="Retrograde transport at the Trans-Golgi-Network"/>
</dbReference>
<dbReference type="BioGRID-ORCS" id="76932">
    <property type="hits" value="1 hit in 78 CRISPR screens"/>
</dbReference>
<dbReference type="ChiTaRS" id="Arfip2">
    <property type="organism name" value="mouse"/>
</dbReference>
<dbReference type="PRO" id="PR:Q8K221"/>
<dbReference type="Proteomes" id="UP000000589">
    <property type="component" value="Chromosome 7"/>
</dbReference>
<dbReference type="RNAct" id="Q8K221">
    <property type="molecule type" value="protein"/>
</dbReference>
<dbReference type="Bgee" id="ENSMUSG00000030881">
    <property type="expression patterns" value="Expressed in dentate gyrus of hippocampal formation granule cell and 250 other cell types or tissues"/>
</dbReference>
<dbReference type="ExpressionAtlas" id="Q8K221">
    <property type="expression patterns" value="baseline and differential"/>
</dbReference>
<dbReference type="GO" id="GO:0005938">
    <property type="term" value="C:cell cortex"/>
    <property type="evidence" value="ECO:0007669"/>
    <property type="project" value="Ensembl"/>
</dbReference>
<dbReference type="GO" id="GO:0005730">
    <property type="term" value="C:nucleolus"/>
    <property type="evidence" value="ECO:0007669"/>
    <property type="project" value="Ensembl"/>
</dbReference>
<dbReference type="GO" id="GO:0001726">
    <property type="term" value="C:ruffle"/>
    <property type="evidence" value="ECO:0007669"/>
    <property type="project" value="Ensembl"/>
</dbReference>
<dbReference type="GO" id="GO:0032588">
    <property type="term" value="C:trans-Golgi network membrane"/>
    <property type="evidence" value="ECO:0007669"/>
    <property type="project" value="Ensembl"/>
</dbReference>
<dbReference type="GO" id="GO:0030742">
    <property type="term" value="F:GTP-dependent protein binding"/>
    <property type="evidence" value="ECO:0007669"/>
    <property type="project" value="Ensembl"/>
</dbReference>
<dbReference type="GO" id="GO:0042802">
    <property type="term" value="F:identical protein binding"/>
    <property type="evidence" value="ECO:0007669"/>
    <property type="project" value="Ensembl"/>
</dbReference>
<dbReference type="GO" id="GO:0140090">
    <property type="term" value="F:membrane curvature sensor activity"/>
    <property type="evidence" value="ECO:0007669"/>
    <property type="project" value="Ensembl"/>
</dbReference>
<dbReference type="GO" id="GO:0070273">
    <property type="term" value="F:phosphatidylinositol-4-phosphate binding"/>
    <property type="evidence" value="ECO:0007669"/>
    <property type="project" value="Ensembl"/>
</dbReference>
<dbReference type="GO" id="GO:0019904">
    <property type="term" value="F:protein domain specific binding"/>
    <property type="evidence" value="ECO:0007669"/>
    <property type="project" value="InterPro"/>
</dbReference>
<dbReference type="GO" id="GO:0030036">
    <property type="term" value="P:actin cytoskeleton organization"/>
    <property type="evidence" value="ECO:0007669"/>
    <property type="project" value="Ensembl"/>
</dbReference>
<dbReference type="GO" id="GO:0000423">
    <property type="term" value="P:mitophagy"/>
    <property type="evidence" value="ECO:0000250"/>
    <property type="project" value="UniProtKB"/>
</dbReference>
<dbReference type="GO" id="GO:0034497">
    <property type="term" value="P:protein localization to phagophore assembly site"/>
    <property type="evidence" value="ECO:0000250"/>
    <property type="project" value="UniProtKB"/>
</dbReference>
<dbReference type="CDD" id="cd07660">
    <property type="entry name" value="BAR_Arfaptin"/>
    <property type="match status" value="1"/>
</dbReference>
<dbReference type="FunFam" id="1.20.1270.60:FF:000003">
    <property type="entry name" value="arfaptin-2 isoform X1"/>
    <property type="match status" value="1"/>
</dbReference>
<dbReference type="Gene3D" id="1.20.1270.60">
    <property type="entry name" value="Arfaptin homology (AH) domain/BAR domain"/>
    <property type="match status" value="1"/>
</dbReference>
<dbReference type="InterPro" id="IPR027267">
    <property type="entry name" value="AH/BAR_dom_sf"/>
</dbReference>
<dbReference type="InterPro" id="IPR010504">
    <property type="entry name" value="AH_dom"/>
</dbReference>
<dbReference type="InterPro" id="IPR030798">
    <property type="entry name" value="Arfaptin_fam"/>
</dbReference>
<dbReference type="PANTHER" id="PTHR12141:SF3">
    <property type="entry name" value="ARFAPTIN-2"/>
    <property type="match status" value="1"/>
</dbReference>
<dbReference type="PANTHER" id="PTHR12141">
    <property type="entry name" value="ARFAPTIN-RELATED"/>
    <property type="match status" value="1"/>
</dbReference>
<dbReference type="Pfam" id="PF06456">
    <property type="entry name" value="Arfaptin"/>
    <property type="match status" value="1"/>
</dbReference>
<dbReference type="SMART" id="SM01015">
    <property type="entry name" value="Arfaptin"/>
    <property type="match status" value="1"/>
</dbReference>
<dbReference type="SUPFAM" id="SSF103657">
    <property type="entry name" value="BAR/IMD domain-like"/>
    <property type="match status" value="1"/>
</dbReference>
<dbReference type="PROSITE" id="PS50870">
    <property type="entry name" value="AH"/>
    <property type="match status" value="1"/>
</dbReference>
<comment type="function">
    <text evidence="1">Plays a role in constitutive metalloproteinase (MMP) secretion from the trans Golgi network. May have important functions during vesicle biogenesis at certain cargo subdomains, which could be predominantly utilized by secreted MMPs, such as MMP7 and MMP2. Also involved in autophagy by regulating the starvation-dependent trafficking of ATG9A vesicles which deliver the phosphatidylinositol 4-kinase beta (PI4KB) to the autophagosome initiation site. Involved in phagophore growth during mitophagy by regulating ATG9A trafficking to mitochondria. In addition, plays a role in NF-kappa-B inhibition by interacting with IKBKB and IKBKG.</text>
</comment>
<comment type="subunit">
    <text evidence="1">Forms homodimers or heterodimers with ARFIP1. Interacts with RAC1. Specifically binds to GTP-bound ARF1 and ARF6, but binds to RAC1.GTP and RAC1.GDP with similar affinities. Interacts with ARL1. Interacts (via N-terminus) with IKBKB and IKBKG; these interactions inhibit activation of NF-kappa-B.</text>
</comment>
<comment type="subcellular location">
    <subcellularLocation>
        <location evidence="1">Golgi apparatus</location>
    </subcellularLocation>
    <subcellularLocation>
        <location evidence="1">Golgi apparatus</location>
        <location evidence="1">trans-Golgi network membrane</location>
    </subcellularLocation>
</comment>
<evidence type="ECO:0000250" key="1">
    <source>
        <dbReference type="UniProtKB" id="P53365"/>
    </source>
</evidence>
<evidence type="ECO:0000255" key="2">
    <source>
        <dbReference type="PROSITE-ProRule" id="PRU00294"/>
    </source>
</evidence>
<evidence type="ECO:0000256" key="3">
    <source>
        <dbReference type="SAM" id="MobiDB-lite"/>
    </source>
</evidence>
<evidence type="ECO:0000305" key="4"/>
<evidence type="ECO:0000312" key="5">
    <source>
        <dbReference type="MGI" id="MGI:1924182"/>
    </source>
</evidence>
<accession>Q8K221</accession>
<accession>Q3U3G6</accession>
<accession>Q9D7M3</accession>
<gene>
    <name evidence="5" type="primary">Arfip2</name>
</gene>